<gene>
    <name evidence="1" type="primary">minE</name>
    <name type="ordered locus">SEN1221</name>
</gene>
<name>MINE_SALEP</name>
<dbReference type="EMBL" id="AM933172">
    <property type="protein sequence ID" value="CAR32801.1"/>
    <property type="molecule type" value="Genomic_DNA"/>
</dbReference>
<dbReference type="RefSeq" id="WP_001185666.1">
    <property type="nucleotide sequence ID" value="NC_011294.1"/>
</dbReference>
<dbReference type="SMR" id="B5R2V4"/>
<dbReference type="GeneID" id="92972923"/>
<dbReference type="KEGG" id="set:SEN1221"/>
<dbReference type="HOGENOM" id="CLU_137929_2_2_6"/>
<dbReference type="Proteomes" id="UP000000613">
    <property type="component" value="Chromosome"/>
</dbReference>
<dbReference type="GO" id="GO:0051301">
    <property type="term" value="P:cell division"/>
    <property type="evidence" value="ECO:0007669"/>
    <property type="project" value="UniProtKB-KW"/>
</dbReference>
<dbReference type="GO" id="GO:0032955">
    <property type="term" value="P:regulation of division septum assembly"/>
    <property type="evidence" value="ECO:0007669"/>
    <property type="project" value="InterPro"/>
</dbReference>
<dbReference type="FunFam" id="3.30.1070.10:FF:000001">
    <property type="entry name" value="Cell division topological specificity factor"/>
    <property type="match status" value="1"/>
</dbReference>
<dbReference type="Gene3D" id="3.30.1070.10">
    <property type="entry name" value="Cell division topological specificity factor MinE"/>
    <property type="match status" value="1"/>
</dbReference>
<dbReference type="HAMAP" id="MF_00262">
    <property type="entry name" value="MinE"/>
    <property type="match status" value="1"/>
</dbReference>
<dbReference type="InterPro" id="IPR005527">
    <property type="entry name" value="MinE"/>
</dbReference>
<dbReference type="InterPro" id="IPR036707">
    <property type="entry name" value="MinE_sf"/>
</dbReference>
<dbReference type="NCBIfam" id="TIGR01215">
    <property type="entry name" value="minE"/>
    <property type="match status" value="1"/>
</dbReference>
<dbReference type="NCBIfam" id="NF001422">
    <property type="entry name" value="PRK00296.1"/>
    <property type="match status" value="1"/>
</dbReference>
<dbReference type="Pfam" id="PF03776">
    <property type="entry name" value="MinE"/>
    <property type="match status" value="1"/>
</dbReference>
<dbReference type="SUPFAM" id="SSF55229">
    <property type="entry name" value="Cell division protein MinE topological specificity domain"/>
    <property type="match status" value="1"/>
</dbReference>
<feature type="chain" id="PRO_1000114239" description="Cell division topological specificity factor">
    <location>
        <begin position="1"/>
        <end position="88"/>
    </location>
</feature>
<reference key="1">
    <citation type="journal article" date="2008" name="Genome Res.">
        <title>Comparative genome analysis of Salmonella enteritidis PT4 and Salmonella gallinarum 287/91 provides insights into evolutionary and host adaptation pathways.</title>
        <authorList>
            <person name="Thomson N.R."/>
            <person name="Clayton D.J."/>
            <person name="Windhorst D."/>
            <person name="Vernikos G."/>
            <person name="Davidson S."/>
            <person name="Churcher C."/>
            <person name="Quail M.A."/>
            <person name="Stevens M."/>
            <person name="Jones M.A."/>
            <person name="Watson M."/>
            <person name="Barron A."/>
            <person name="Layton A."/>
            <person name="Pickard D."/>
            <person name="Kingsley R.A."/>
            <person name="Bignell A."/>
            <person name="Clark L."/>
            <person name="Harris B."/>
            <person name="Ormond D."/>
            <person name="Abdellah Z."/>
            <person name="Brooks K."/>
            <person name="Cherevach I."/>
            <person name="Chillingworth T."/>
            <person name="Woodward J."/>
            <person name="Norberczak H."/>
            <person name="Lord A."/>
            <person name="Arrowsmith C."/>
            <person name="Jagels K."/>
            <person name="Moule S."/>
            <person name="Mungall K."/>
            <person name="Saunders M."/>
            <person name="Whitehead S."/>
            <person name="Chabalgoity J.A."/>
            <person name="Maskell D."/>
            <person name="Humphreys T."/>
            <person name="Roberts M."/>
            <person name="Barrow P.A."/>
            <person name="Dougan G."/>
            <person name="Parkhill J."/>
        </authorList>
    </citation>
    <scope>NUCLEOTIDE SEQUENCE [LARGE SCALE GENOMIC DNA]</scope>
    <source>
        <strain>P125109</strain>
    </source>
</reference>
<accession>B5R2V4</accession>
<keyword id="KW-0131">Cell cycle</keyword>
<keyword id="KW-0132">Cell division</keyword>
<organism>
    <name type="scientific">Salmonella enteritidis PT4 (strain P125109)</name>
    <dbReference type="NCBI Taxonomy" id="550537"/>
    <lineage>
        <taxon>Bacteria</taxon>
        <taxon>Pseudomonadati</taxon>
        <taxon>Pseudomonadota</taxon>
        <taxon>Gammaproteobacteria</taxon>
        <taxon>Enterobacterales</taxon>
        <taxon>Enterobacteriaceae</taxon>
        <taxon>Salmonella</taxon>
    </lineage>
</organism>
<evidence type="ECO:0000255" key="1">
    <source>
        <dbReference type="HAMAP-Rule" id="MF_00262"/>
    </source>
</evidence>
<protein>
    <recommendedName>
        <fullName evidence="1">Cell division topological specificity factor</fullName>
    </recommendedName>
</protein>
<proteinExistence type="inferred from homology"/>
<sequence length="88" mass="10182">MALLDFFLSRKKSTANIAKERLQIIVAERRRSDAEPHYLPQLRKDILEVICKYVQIDPEMVTVQLEQKDGDISILELNVTLPEAEESK</sequence>
<comment type="function">
    <text evidence="1">Prevents the cell division inhibition by proteins MinC and MinD at internal division sites while permitting inhibition at polar sites. This ensures cell division at the proper site by restricting the formation of a division septum at the midpoint of the long axis of the cell.</text>
</comment>
<comment type="similarity">
    <text evidence="1">Belongs to the MinE family.</text>
</comment>